<dbReference type="EMBL" id="DQ317523">
    <property type="protein sequence ID" value="ABC25163.1"/>
    <property type="molecule type" value="Genomic_DNA"/>
</dbReference>
<dbReference type="EMBL" id="X06429">
    <property type="protein sequence ID" value="CAA29735.1"/>
    <property type="molecule type" value="Genomic_DNA"/>
</dbReference>
<dbReference type="PIR" id="S00718">
    <property type="entry name" value="S00718"/>
</dbReference>
<dbReference type="SMR" id="P18663"/>
<dbReference type="FunCoup" id="P18663">
    <property type="interactions" value="1420"/>
</dbReference>
<dbReference type="STRING" id="3847.P18663"/>
<dbReference type="PaxDb" id="3847-GLYMA19G29955.1"/>
<dbReference type="KEGG" id="gmx:3989337"/>
<dbReference type="eggNOG" id="KOG0438">
    <property type="taxonomic scope" value="Eukaryota"/>
</dbReference>
<dbReference type="InParanoid" id="P18663"/>
<dbReference type="Proteomes" id="UP000008827">
    <property type="component" value="Chloroplast"/>
</dbReference>
<dbReference type="GO" id="GO:0009507">
    <property type="term" value="C:chloroplast"/>
    <property type="evidence" value="ECO:0007669"/>
    <property type="project" value="UniProtKB-SubCell"/>
</dbReference>
<dbReference type="GO" id="GO:0005762">
    <property type="term" value="C:mitochondrial large ribosomal subunit"/>
    <property type="evidence" value="ECO:0000318"/>
    <property type="project" value="GO_Central"/>
</dbReference>
<dbReference type="GO" id="GO:0003723">
    <property type="term" value="F:RNA binding"/>
    <property type="evidence" value="ECO:0000318"/>
    <property type="project" value="GO_Central"/>
</dbReference>
<dbReference type="GO" id="GO:0019843">
    <property type="term" value="F:rRNA binding"/>
    <property type="evidence" value="ECO:0007669"/>
    <property type="project" value="UniProtKB-UniRule"/>
</dbReference>
<dbReference type="GO" id="GO:0003735">
    <property type="term" value="F:structural constituent of ribosome"/>
    <property type="evidence" value="ECO:0000318"/>
    <property type="project" value="GO_Central"/>
</dbReference>
<dbReference type="GO" id="GO:0016740">
    <property type="term" value="F:transferase activity"/>
    <property type="evidence" value="ECO:0007669"/>
    <property type="project" value="InterPro"/>
</dbReference>
<dbReference type="GO" id="GO:0032543">
    <property type="term" value="P:mitochondrial translation"/>
    <property type="evidence" value="ECO:0000318"/>
    <property type="project" value="GO_Central"/>
</dbReference>
<dbReference type="FunFam" id="4.10.950.10:FF:000001">
    <property type="entry name" value="50S ribosomal protein L2"/>
    <property type="match status" value="1"/>
</dbReference>
<dbReference type="FunFam" id="2.30.30.30:FF:000008">
    <property type="entry name" value="50S ribosomal protein L2, chloroplastic"/>
    <property type="match status" value="1"/>
</dbReference>
<dbReference type="FunFam" id="2.40.50.140:FF:000029">
    <property type="entry name" value="50S ribosomal protein L2, chloroplastic"/>
    <property type="match status" value="1"/>
</dbReference>
<dbReference type="Gene3D" id="2.30.30.30">
    <property type="match status" value="1"/>
</dbReference>
<dbReference type="Gene3D" id="2.40.50.140">
    <property type="entry name" value="Nucleic acid-binding proteins"/>
    <property type="match status" value="1"/>
</dbReference>
<dbReference type="Gene3D" id="4.10.950.10">
    <property type="entry name" value="Ribosomal protein L2, domain 3"/>
    <property type="match status" value="1"/>
</dbReference>
<dbReference type="HAMAP" id="MF_01320_B">
    <property type="entry name" value="Ribosomal_uL2_B"/>
    <property type="match status" value="1"/>
</dbReference>
<dbReference type="InterPro" id="IPR012340">
    <property type="entry name" value="NA-bd_OB-fold"/>
</dbReference>
<dbReference type="InterPro" id="IPR014722">
    <property type="entry name" value="Rib_uL2_dom2"/>
</dbReference>
<dbReference type="InterPro" id="IPR002171">
    <property type="entry name" value="Ribosomal_uL2"/>
</dbReference>
<dbReference type="InterPro" id="IPR005880">
    <property type="entry name" value="Ribosomal_uL2_bac/org-type"/>
</dbReference>
<dbReference type="InterPro" id="IPR022669">
    <property type="entry name" value="Ribosomal_uL2_C"/>
</dbReference>
<dbReference type="InterPro" id="IPR022671">
    <property type="entry name" value="Ribosomal_uL2_CS"/>
</dbReference>
<dbReference type="InterPro" id="IPR014726">
    <property type="entry name" value="Ribosomal_uL2_dom3"/>
</dbReference>
<dbReference type="InterPro" id="IPR022666">
    <property type="entry name" value="Ribosomal_uL2_RNA-bd_dom"/>
</dbReference>
<dbReference type="InterPro" id="IPR008991">
    <property type="entry name" value="Translation_prot_SH3-like_sf"/>
</dbReference>
<dbReference type="NCBIfam" id="TIGR01171">
    <property type="entry name" value="rplB_bact"/>
    <property type="match status" value="1"/>
</dbReference>
<dbReference type="PANTHER" id="PTHR13691:SF5">
    <property type="entry name" value="LARGE RIBOSOMAL SUBUNIT PROTEIN UL2M"/>
    <property type="match status" value="1"/>
</dbReference>
<dbReference type="PANTHER" id="PTHR13691">
    <property type="entry name" value="RIBOSOMAL PROTEIN L2"/>
    <property type="match status" value="1"/>
</dbReference>
<dbReference type="Pfam" id="PF00181">
    <property type="entry name" value="Ribosomal_L2"/>
    <property type="match status" value="1"/>
</dbReference>
<dbReference type="Pfam" id="PF03947">
    <property type="entry name" value="Ribosomal_L2_C"/>
    <property type="match status" value="1"/>
</dbReference>
<dbReference type="PIRSF" id="PIRSF002158">
    <property type="entry name" value="Ribosomal_L2"/>
    <property type="match status" value="1"/>
</dbReference>
<dbReference type="SMART" id="SM01383">
    <property type="entry name" value="Ribosomal_L2"/>
    <property type="match status" value="1"/>
</dbReference>
<dbReference type="SMART" id="SM01382">
    <property type="entry name" value="Ribosomal_L2_C"/>
    <property type="match status" value="1"/>
</dbReference>
<dbReference type="SUPFAM" id="SSF50249">
    <property type="entry name" value="Nucleic acid-binding proteins"/>
    <property type="match status" value="1"/>
</dbReference>
<dbReference type="SUPFAM" id="SSF50104">
    <property type="entry name" value="Translation proteins SH3-like domain"/>
    <property type="match status" value="1"/>
</dbReference>
<dbReference type="PROSITE" id="PS00467">
    <property type="entry name" value="RIBOSOMAL_L2"/>
    <property type="match status" value="1"/>
</dbReference>
<keyword id="KW-0150">Chloroplast</keyword>
<keyword id="KW-0934">Plastid</keyword>
<keyword id="KW-1185">Reference proteome</keyword>
<keyword id="KW-0687">Ribonucleoprotein</keyword>
<keyword id="KW-0689">Ribosomal protein</keyword>
<name>RK2A_SOYBN</name>
<proteinExistence type="inferred from homology"/>
<protein>
    <recommendedName>
        <fullName evidence="2">Large ribosomal subunit protein uL2cz</fullName>
    </recommendedName>
    <alternativeName>
        <fullName evidence="4">50S ribosomal protein L2-A, chloroplastic</fullName>
    </alternativeName>
</protein>
<organism>
    <name type="scientific">Glycine max</name>
    <name type="common">Soybean</name>
    <name type="synonym">Glycine hispida</name>
    <dbReference type="NCBI Taxonomy" id="3847"/>
    <lineage>
        <taxon>Eukaryota</taxon>
        <taxon>Viridiplantae</taxon>
        <taxon>Streptophyta</taxon>
        <taxon>Embryophyta</taxon>
        <taxon>Tracheophyta</taxon>
        <taxon>Spermatophyta</taxon>
        <taxon>Magnoliopsida</taxon>
        <taxon>eudicotyledons</taxon>
        <taxon>Gunneridae</taxon>
        <taxon>Pentapetalae</taxon>
        <taxon>rosids</taxon>
        <taxon>fabids</taxon>
        <taxon>Fabales</taxon>
        <taxon>Fabaceae</taxon>
        <taxon>Papilionoideae</taxon>
        <taxon>50 kb inversion clade</taxon>
        <taxon>NPAAA clade</taxon>
        <taxon>indigoferoid/millettioid clade</taxon>
        <taxon>Phaseoleae</taxon>
        <taxon>Glycine</taxon>
        <taxon>Glycine subgen. Soja</taxon>
    </lineage>
</organism>
<geneLocation type="chloroplast"/>
<evidence type="ECO:0000250" key="1"/>
<evidence type="ECO:0000255" key="2">
    <source>
        <dbReference type="HAMAP-Rule" id="MF_01320"/>
    </source>
</evidence>
<evidence type="ECO:0000256" key="3">
    <source>
        <dbReference type="SAM" id="MobiDB-lite"/>
    </source>
</evidence>
<evidence type="ECO:0000305" key="4"/>
<accession>P18663</accession>
<accession>Q2PMP5</accession>
<reference key="1">
    <citation type="journal article" date="2005" name="Plant Mol. Biol.">
        <title>Complete chloroplast genome sequence of Glycine max and comparative analyses with other legume genomes.</title>
        <authorList>
            <person name="Saski C."/>
            <person name="Lee S.-B."/>
            <person name="Daniell H."/>
            <person name="Wood T.C."/>
            <person name="Tomkins J."/>
            <person name="Kim H.-G."/>
            <person name="Jansen R.K."/>
        </authorList>
    </citation>
    <scope>NUCLEOTIDE SEQUENCE [LARGE SCALE GENOMIC DNA]</scope>
    <source>
        <strain>cv. PI 437654</strain>
    </source>
</reference>
<reference key="2">
    <citation type="journal article" date="1988" name="Nucleic Acids Res.">
        <title>The soybean chloroplast genome: complete sequence of the rps19 gene, including flanking parts containing exon 2 of rpl2 (upstream), but rpl22 (downstream).</title>
        <authorList>
            <person name="Spielmann A."/>
            <person name="Roux E."/>
            <person name="von Allmen J.-M."/>
            <person name="Stutz E."/>
        </authorList>
    </citation>
    <scope>NUCLEOTIDE SEQUENCE [GENOMIC DNA] OF 132-274</scope>
</reference>
<sequence>MAIHLYKTSTPSTRNGAVDSQVKSNPRNHLIYGQHRCGKGRNARGIITAGHRGGGHKRLYRKIDFRRNEKNIYGRIVTIEYDPNRNAYICLIHYGDGEKKYILHPRGAIIGDTIVSGTEVPIKMGNALPLTDMPLGTAIHNIEITLGKGGQLARAAGAVAKLIAKEGKSATLKLPSGEVRLISKNCSATVGQVGNVGVNQKNLGRAGSKCWLGKRPVVRGVVMNPVDHPHGGGEGRAPIGRKKPATPWGFPALGRRSRKRKKYSDNLILRRRTK</sequence>
<feature type="chain" id="PRO_0000129705" description="Large ribosomal subunit protein uL2cz">
    <location>
        <begin position="1"/>
        <end position="274"/>
    </location>
</feature>
<feature type="region of interest" description="Disordered" evidence="3">
    <location>
        <begin position="1"/>
        <end position="22"/>
    </location>
</feature>
<feature type="region of interest" description="Disordered" evidence="3">
    <location>
        <begin position="224"/>
        <end position="274"/>
    </location>
</feature>
<feature type="sequence conflict" description="In Ref. 2; CAA29735." evidence="4" ref="2">
    <original>T</original>
    <variation>K</variation>
    <location>
        <position position="137"/>
    </location>
</feature>
<comment type="subunit">
    <text evidence="1">Part of the 50S ribosomal subunit.</text>
</comment>
<comment type="subcellular location">
    <subcellularLocation>
        <location>Plastid</location>
        <location>Chloroplast</location>
    </subcellularLocation>
</comment>
<comment type="similarity">
    <text evidence="4">Belongs to the universal ribosomal protein uL2 family.</text>
</comment>
<comment type="caution">
    <text evidence="4">There is 1 gene for this protein in each of the chloroplast inverted repeats; while they are usually identical, in this organism they are not. The other copy is AC Q2PMM3.</text>
</comment>
<gene>
    <name type="primary">rpl2-A</name>
</gene>